<sequence length="1357" mass="151016">MAYSYTEKKRIRKDFSKLPDVMDVPYLLAIQLDSYREFLQAGATKDQFRDVGLHAAFKSVFPIISYSGNAALEYVGYRLGEPAFDVKECVLRGVTYAVPLRVKVRLIIFDKESSNKAIKDIKEQEVYMGEIPLMTENGTFVINGTERVIVSQLHRSPGVFFDHDRGKTHSSGKLLYSARIIPYRGSWLDFEFDPKDCVFVRIDRRRKLPASVLLRALGYTTEQVLDAFYTTNVFHVRGENLSLELVPQRLRGEIAVLDILDDKGKVIVEQGRRITARHINQLEKAGIKELEVPLDYVLGRTTAKVIVHPATGEIIAECNTELNTEILAKIAKAQVVRIETLYTNDIDCGPFVSDTLKIDSTSNQLEALVEIYRMMRPGEPPTKDAAETLFNNLFFSPERYDLSAVGRMKFNRRIGRTEIEGSGVLCKEDIVAVLKTLVDIRNGKGIVDDIDHLGNRRVRCVGEMAENQFRVGLVRVERAVKERLSMAESEGLMPQDLINAKPVAAAVKEFFGSSQLSQFMGQNNPLSEITHKRRVSALGPGGLTRERAGFEVRDVHPTHYGRVCPIETPEGPNIGLINSLAAYARTNQYGFLESPYRVVKEGLVTEEIVFLSAIEEADHVIAQASAAMNDKQELIDELVAVRHLNEFTVKAPADVTLMDVSPKQVVSVAASLIPFLEHDDANRALMGSNMQRQAVPTLRADKPLVGTGMERNVARDSGVCVVARRGGVIDSVDASRIVVRVADDEVETGEAGVDIYNLTKYTRSNQNTCINQRPLVSKGDRVQRSDIMADGPSTDMGELALGQNMRIAFMAWNGFNFEDSICLSERVVQEDRFTTIHIQELTCVARDTKLGPEEITADIPNVGEAALNKLDEAGIVYVGAEVGAGDILVGKVTPKGETQLTPEEKLLRAIFGEKASDVKDTSLRVPTGTKGTVIDVQVFTRDGVERDARALSIEKSQLDEIRKDLNEEFRIVEGATFERLRSALVGRVAEGGAGLKKGQEITNEVLDGLEHGQWFKLRMAEDALNEQLEKAQAYIVDRRRLLDDKFEDKKRKLQQGDDLAPGVLKIVKVYLAIRRRIQPGDKMAGRHGNKGVVSVIMPVEDMPHDANGTPVDIVLNPLGVPSRMNVGQILETHLGLAAKGLGEKINRMLEEQRKVAELRKFLNEIYNEIGGRQESLEDLTDNEILDLAKNLRNGVPMATPVFDGAKESEIKAMLKLADMPESGQMQLFDGRTGNKFERAVTVGYMYMLKLNHLVDDKMHARSTGSYSLVTQQPLGGKAQFGGQRFGEMEVWALEAYCAAYTLQEMLTVKSDDVNGRTKMYKNIVDGDHRMEPGMPESFNVLIKEIRSLGIDIDLETE</sequence>
<protein>
    <recommendedName>
        <fullName evidence="1">DNA-directed RNA polymerase subunit beta</fullName>
        <shortName evidence="1">RNAP subunit beta</shortName>
        <ecNumber evidence="1">2.7.7.6</ecNumber>
    </recommendedName>
    <alternativeName>
        <fullName evidence="1">RNA polymerase subunit beta</fullName>
    </alternativeName>
    <alternativeName>
        <fullName evidence="1">Transcriptase subunit beta</fullName>
    </alternativeName>
</protein>
<keyword id="KW-0240">DNA-directed RNA polymerase</keyword>
<keyword id="KW-0548">Nucleotidyltransferase</keyword>
<keyword id="KW-0804">Transcription</keyword>
<keyword id="KW-0808">Transferase</keyword>
<evidence type="ECO:0000255" key="1">
    <source>
        <dbReference type="HAMAP-Rule" id="MF_01321"/>
    </source>
</evidence>
<gene>
    <name evidence="1" type="primary">rpoB</name>
    <name type="ordered locus">Psyr_4555</name>
</gene>
<feature type="chain" id="PRO_0000224097" description="DNA-directed RNA polymerase subunit beta">
    <location>
        <begin position="1"/>
        <end position="1357"/>
    </location>
</feature>
<proteinExistence type="inferred from homology"/>
<accession>Q4ZMN7</accession>
<reference key="1">
    <citation type="journal article" date="2005" name="Proc. Natl. Acad. Sci. U.S.A.">
        <title>Comparison of the complete genome sequences of Pseudomonas syringae pv. syringae B728a and pv. tomato DC3000.</title>
        <authorList>
            <person name="Feil H."/>
            <person name="Feil W.S."/>
            <person name="Chain P."/>
            <person name="Larimer F."/>
            <person name="Dibartolo G."/>
            <person name="Copeland A."/>
            <person name="Lykidis A."/>
            <person name="Trong S."/>
            <person name="Nolan M."/>
            <person name="Goltsman E."/>
            <person name="Thiel J."/>
            <person name="Malfatti S."/>
            <person name="Loper J.E."/>
            <person name="Lapidus A."/>
            <person name="Detter J.C."/>
            <person name="Land M."/>
            <person name="Richardson P.M."/>
            <person name="Kyrpides N.C."/>
            <person name="Ivanova N."/>
            <person name="Lindow S.E."/>
        </authorList>
    </citation>
    <scope>NUCLEOTIDE SEQUENCE [LARGE SCALE GENOMIC DNA]</scope>
    <source>
        <strain>B728a</strain>
    </source>
</reference>
<organism>
    <name type="scientific">Pseudomonas syringae pv. syringae (strain B728a)</name>
    <dbReference type="NCBI Taxonomy" id="205918"/>
    <lineage>
        <taxon>Bacteria</taxon>
        <taxon>Pseudomonadati</taxon>
        <taxon>Pseudomonadota</taxon>
        <taxon>Gammaproteobacteria</taxon>
        <taxon>Pseudomonadales</taxon>
        <taxon>Pseudomonadaceae</taxon>
        <taxon>Pseudomonas</taxon>
        <taxon>Pseudomonas syringae</taxon>
    </lineage>
</organism>
<dbReference type="EC" id="2.7.7.6" evidence="1"/>
<dbReference type="EMBL" id="CP000075">
    <property type="protein sequence ID" value="AAY39585.1"/>
    <property type="molecule type" value="Genomic_DNA"/>
</dbReference>
<dbReference type="RefSeq" id="WP_011269095.1">
    <property type="nucleotide sequence ID" value="NC_007005.1"/>
</dbReference>
<dbReference type="RefSeq" id="YP_237623.1">
    <property type="nucleotide sequence ID" value="NC_007005.1"/>
</dbReference>
<dbReference type="SMR" id="Q4ZMN7"/>
<dbReference type="STRING" id="205918.Psyr_4555"/>
<dbReference type="KEGG" id="psb:Psyr_4555"/>
<dbReference type="PATRIC" id="fig|205918.7.peg.4694"/>
<dbReference type="eggNOG" id="COG0085">
    <property type="taxonomic scope" value="Bacteria"/>
</dbReference>
<dbReference type="HOGENOM" id="CLU_000524_4_0_6"/>
<dbReference type="OrthoDB" id="9803954at2"/>
<dbReference type="Proteomes" id="UP000000426">
    <property type="component" value="Chromosome"/>
</dbReference>
<dbReference type="GO" id="GO:0000428">
    <property type="term" value="C:DNA-directed RNA polymerase complex"/>
    <property type="evidence" value="ECO:0007669"/>
    <property type="project" value="UniProtKB-KW"/>
</dbReference>
<dbReference type="GO" id="GO:0003677">
    <property type="term" value="F:DNA binding"/>
    <property type="evidence" value="ECO:0007669"/>
    <property type="project" value="UniProtKB-UniRule"/>
</dbReference>
<dbReference type="GO" id="GO:0003899">
    <property type="term" value="F:DNA-directed RNA polymerase activity"/>
    <property type="evidence" value="ECO:0007669"/>
    <property type="project" value="UniProtKB-UniRule"/>
</dbReference>
<dbReference type="GO" id="GO:0032549">
    <property type="term" value="F:ribonucleoside binding"/>
    <property type="evidence" value="ECO:0007669"/>
    <property type="project" value="InterPro"/>
</dbReference>
<dbReference type="GO" id="GO:0006351">
    <property type="term" value="P:DNA-templated transcription"/>
    <property type="evidence" value="ECO:0007669"/>
    <property type="project" value="UniProtKB-UniRule"/>
</dbReference>
<dbReference type="CDD" id="cd00653">
    <property type="entry name" value="RNA_pol_B_RPB2"/>
    <property type="match status" value="1"/>
</dbReference>
<dbReference type="FunFam" id="2.40.50.100:FF:000006">
    <property type="entry name" value="DNA-directed RNA polymerase subunit beta"/>
    <property type="match status" value="1"/>
</dbReference>
<dbReference type="FunFam" id="2.40.50.150:FF:000001">
    <property type="entry name" value="DNA-directed RNA polymerase subunit beta"/>
    <property type="match status" value="1"/>
</dbReference>
<dbReference type="FunFam" id="3.90.1110.10:FF:000001">
    <property type="entry name" value="DNA-directed RNA polymerase subunit beta"/>
    <property type="match status" value="1"/>
</dbReference>
<dbReference type="FunFam" id="3.90.1110.10:FF:000004">
    <property type="entry name" value="DNA-directed RNA polymerase subunit beta"/>
    <property type="match status" value="1"/>
</dbReference>
<dbReference type="FunFam" id="3.90.1800.10:FF:000001">
    <property type="entry name" value="DNA-directed RNA polymerase subunit beta"/>
    <property type="match status" value="1"/>
</dbReference>
<dbReference type="Gene3D" id="2.40.50.100">
    <property type="match status" value="1"/>
</dbReference>
<dbReference type="Gene3D" id="2.40.50.150">
    <property type="match status" value="1"/>
</dbReference>
<dbReference type="Gene3D" id="3.90.1100.10">
    <property type="match status" value="2"/>
</dbReference>
<dbReference type="Gene3D" id="2.30.150.10">
    <property type="entry name" value="DNA-directed RNA polymerase, beta subunit, external 1 domain"/>
    <property type="match status" value="1"/>
</dbReference>
<dbReference type="Gene3D" id="2.40.270.10">
    <property type="entry name" value="DNA-directed RNA polymerase, subunit 2, domain 6"/>
    <property type="match status" value="1"/>
</dbReference>
<dbReference type="Gene3D" id="3.90.1800.10">
    <property type="entry name" value="RNA polymerase alpha subunit dimerisation domain"/>
    <property type="match status" value="1"/>
</dbReference>
<dbReference type="Gene3D" id="3.90.1110.10">
    <property type="entry name" value="RNA polymerase Rpb2, domain 2"/>
    <property type="match status" value="1"/>
</dbReference>
<dbReference type="HAMAP" id="MF_01321">
    <property type="entry name" value="RNApol_bact_RpoB"/>
    <property type="match status" value="1"/>
</dbReference>
<dbReference type="InterPro" id="IPR042107">
    <property type="entry name" value="DNA-dir_RNA_pol_bsu_ext_1_sf"/>
</dbReference>
<dbReference type="InterPro" id="IPR019462">
    <property type="entry name" value="DNA-dir_RNA_pol_bsu_external_1"/>
</dbReference>
<dbReference type="InterPro" id="IPR015712">
    <property type="entry name" value="DNA-dir_RNA_pol_su2"/>
</dbReference>
<dbReference type="InterPro" id="IPR007120">
    <property type="entry name" value="DNA-dir_RNAP_su2_dom"/>
</dbReference>
<dbReference type="InterPro" id="IPR037033">
    <property type="entry name" value="DNA-dir_RNAP_su2_hyb_sf"/>
</dbReference>
<dbReference type="InterPro" id="IPR010243">
    <property type="entry name" value="RNA_pol_bsu_bac"/>
</dbReference>
<dbReference type="InterPro" id="IPR007121">
    <property type="entry name" value="RNA_pol_bsu_CS"/>
</dbReference>
<dbReference type="InterPro" id="IPR007644">
    <property type="entry name" value="RNA_pol_bsu_protrusion"/>
</dbReference>
<dbReference type="InterPro" id="IPR007642">
    <property type="entry name" value="RNA_pol_Rpb2_2"/>
</dbReference>
<dbReference type="InterPro" id="IPR037034">
    <property type="entry name" value="RNA_pol_Rpb2_2_sf"/>
</dbReference>
<dbReference type="InterPro" id="IPR007645">
    <property type="entry name" value="RNA_pol_Rpb2_3"/>
</dbReference>
<dbReference type="InterPro" id="IPR007641">
    <property type="entry name" value="RNA_pol_Rpb2_7"/>
</dbReference>
<dbReference type="InterPro" id="IPR014724">
    <property type="entry name" value="RNA_pol_RPB2_OB-fold"/>
</dbReference>
<dbReference type="NCBIfam" id="NF001616">
    <property type="entry name" value="PRK00405.1"/>
    <property type="match status" value="1"/>
</dbReference>
<dbReference type="NCBIfam" id="TIGR02013">
    <property type="entry name" value="rpoB"/>
    <property type="match status" value="1"/>
</dbReference>
<dbReference type="PANTHER" id="PTHR20856">
    <property type="entry name" value="DNA-DIRECTED RNA POLYMERASE I SUBUNIT 2"/>
    <property type="match status" value="1"/>
</dbReference>
<dbReference type="Pfam" id="PF04563">
    <property type="entry name" value="RNA_pol_Rpb2_1"/>
    <property type="match status" value="1"/>
</dbReference>
<dbReference type="Pfam" id="PF04561">
    <property type="entry name" value="RNA_pol_Rpb2_2"/>
    <property type="match status" value="2"/>
</dbReference>
<dbReference type="Pfam" id="PF04565">
    <property type="entry name" value="RNA_pol_Rpb2_3"/>
    <property type="match status" value="1"/>
</dbReference>
<dbReference type="Pfam" id="PF10385">
    <property type="entry name" value="RNA_pol_Rpb2_45"/>
    <property type="match status" value="1"/>
</dbReference>
<dbReference type="Pfam" id="PF00562">
    <property type="entry name" value="RNA_pol_Rpb2_6"/>
    <property type="match status" value="1"/>
</dbReference>
<dbReference type="Pfam" id="PF04560">
    <property type="entry name" value="RNA_pol_Rpb2_7"/>
    <property type="match status" value="1"/>
</dbReference>
<dbReference type="SUPFAM" id="SSF64484">
    <property type="entry name" value="beta and beta-prime subunits of DNA dependent RNA-polymerase"/>
    <property type="match status" value="1"/>
</dbReference>
<dbReference type="PROSITE" id="PS01166">
    <property type="entry name" value="RNA_POL_BETA"/>
    <property type="match status" value="1"/>
</dbReference>
<name>RPOB_PSEU2</name>
<comment type="function">
    <text evidence="1">DNA-dependent RNA polymerase catalyzes the transcription of DNA into RNA using the four ribonucleoside triphosphates as substrates.</text>
</comment>
<comment type="catalytic activity">
    <reaction evidence="1">
        <text>RNA(n) + a ribonucleoside 5'-triphosphate = RNA(n+1) + diphosphate</text>
        <dbReference type="Rhea" id="RHEA:21248"/>
        <dbReference type="Rhea" id="RHEA-COMP:14527"/>
        <dbReference type="Rhea" id="RHEA-COMP:17342"/>
        <dbReference type="ChEBI" id="CHEBI:33019"/>
        <dbReference type="ChEBI" id="CHEBI:61557"/>
        <dbReference type="ChEBI" id="CHEBI:140395"/>
        <dbReference type="EC" id="2.7.7.6"/>
    </reaction>
</comment>
<comment type="subunit">
    <text evidence="1">The RNAP catalytic core consists of 2 alpha, 1 beta, 1 beta' and 1 omega subunit. When a sigma factor is associated with the core the holoenzyme is formed, which can initiate transcription.</text>
</comment>
<comment type="similarity">
    <text evidence="1">Belongs to the RNA polymerase beta chain family.</text>
</comment>